<reference key="1">
    <citation type="submission" date="2006-12" db="EMBL/GenBank/DDBJ databases">
        <title>Bifidobacterium adolescentis complete genome sequence.</title>
        <authorList>
            <person name="Suzuki T."/>
            <person name="Tsuda Y."/>
            <person name="Kanou N."/>
            <person name="Inoue T."/>
            <person name="Kumazaki K."/>
            <person name="Nagano S."/>
            <person name="Hirai S."/>
            <person name="Tanaka K."/>
            <person name="Watanabe K."/>
        </authorList>
    </citation>
    <scope>NUCLEOTIDE SEQUENCE [LARGE SCALE GENOMIC DNA]</scope>
    <source>
        <strain>ATCC 15703 / DSM 20083 / NCTC 11814 / E194a</strain>
    </source>
</reference>
<reference key="2">
    <citation type="journal article" date="2013" name="Appl. Environ. Microbiol.">
        <title>Expression and characterization of a Bifidobacterium adolescentis beta-mannanase carrying mannan-binding and cell association motifs.</title>
        <authorList>
            <person name="Kulcinskaja E."/>
            <person name="Rosengren A."/>
            <person name="Ibrahim R."/>
            <person name="Kolenova K."/>
            <person name="Stalbrand H."/>
        </authorList>
    </citation>
    <scope>FUNCTION</scope>
    <scope>CATALYTIC ACTIVITY</scope>
    <scope>POLYSACCHARIDE-BINDING</scope>
    <scope>BIOPHYSICOCHEMICAL PROPERTIES</scope>
    <scope>DOMAIN</scope>
    <scope>SUBSTRATE SPECIFICITY</scope>
    <source>
        <strain>ATCC 15703 / DSM 20083 / NCTC 11814 / E194a</strain>
    </source>
</reference>
<sequence>MKTTVTKLLATVAAASTIFGMSTLPAFAAEGKSASNGNSVNISDVNATAETRALFDKLKNSGKGDLRFGQQHATDENISSSASQGDVYETTGKYPAVFGWDAGLALRGAEKPGSGADKNANAKALAQNITDADSKGAIVTLSAHWCNPGTGKDFNDTTAVASELLPGGKYSGTFNKELDAIAATAQRAKRSDGTLIPIIFRPLHENNGSWFWWGATHASASEYKELYRYIVDYLRDVKDVHNLLYAYSPGGVFNGDSTDYLATYPGDQWVDVLGYDEYDSDDSADDSSAWINTVVKDMKMVSDQASQRGKIVALTEFGRSGDRKFKESGTGDKDTKFFSELAEALAENVPSTAYMMTWANFGGGGDNFQAYTSWKGSDGEADFKAFADSNKNLMASKDNVDYSNAPAAAMQNGSARIVTPVDGNRVTDTKVVVRVKTEGVKYSDLDLNSAIVTTDRGQNVKLKYSCNGYFTGILDLNAAGINLDQSKLTLTPQVKTKDGKTLAAADGNGSVTVKLGAKPEQTVDNVEDFDSYDNEAELQSVYSPSHSTKSNLTLVDSPEDNGTKAGNIHYDFVSYPEYNGFQRSHTPKQDWSGFSKLNMFLKADGSDHKFVVQVNAGGVTFEAYPKIDGTDGHVVSLNFGDADGNGGDFAPASWDTAHAGMKLSQKLLSKVGSFALYINDNGGNRPKSGDLTLDSIKLDGKRDAYAPNTNPTPGNTAKAQSVDDFSGYSDDAAAQSAWGNRGHTEVLSLDEGPTDGSKALRFKYDFSNGGWYDVAKYLDGANWSGESVLAFQVKGDGSGNAIGLQIGTSDGKYFLASVKLDFTGWKQIEIPLVDNANLTQSWPEDANKDNPMTEDDLASIKELVFASQQWNSESDGLDSSIADIKVEPAENTSNEQTPKDESKTEVKADKEQEQSEDTSADVTAQDPATCPISDEDSKGSTGNTTVTVKPTPDTKEPADNTGKDGLSRTGSNIISAIAAVAVLLLGGCAVLIARKRKGGDIE</sequence>
<name>MANA_BIFAA</name>
<dbReference type="EC" id="3.2.1.78" evidence="6"/>
<dbReference type="EMBL" id="AP009256">
    <property type="protein sequence ID" value="BAF39811.1"/>
    <property type="molecule type" value="Genomic_DNA"/>
</dbReference>
<dbReference type="RefSeq" id="WP_011743387.1">
    <property type="nucleotide sequence ID" value="NC_008618.1"/>
</dbReference>
<dbReference type="SMR" id="A1A278"/>
<dbReference type="STRING" id="367928.BAD_1030"/>
<dbReference type="CAZy" id="CBM23">
    <property type="family name" value="Carbohydrate-Binding Module Family 23"/>
</dbReference>
<dbReference type="CAZy" id="GH26">
    <property type="family name" value="Glycoside Hydrolase Family 26"/>
</dbReference>
<dbReference type="GeneID" id="4557264"/>
<dbReference type="KEGG" id="bad:BAD_1030"/>
<dbReference type="HOGENOM" id="CLU_297304_0_0_11"/>
<dbReference type="Proteomes" id="UP000008702">
    <property type="component" value="Chromosome"/>
</dbReference>
<dbReference type="GO" id="GO:0005576">
    <property type="term" value="C:extracellular region"/>
    <property type="evidence" value="ECO:0007669"/>
    <property type="project" value="UniProtKB-KW"/>
</dbReference>
<dbReference type="GO" id="GO:0008810">
    <property type="term" value="F:cellulase activity"/>
    <property type="evidence" value="ECO:0007669"/>
    <property type="project" value="InterPro"/>
</dbReference>
<dbReference type="GO" id="GO:2001065">
    <property type="term" value="F:mannan binding"/>
    <property type="evidence" value="ECO:0000314"/>
    <property type="project" value="UniProtKB"/>
</dbReference>
<dbReference type="GO" id="GO:0016985">
    <property type="term" value="F:mannan endo-1,4-beta-mannosidase activity"/>
    <property type="evidence" value="ECO:0000314"/>
    <property type="project" value="UniProtKB"/>
</dbReference>
<dbReference type="GO" id="GO:0030245">
    <property type="term" value="P:cellulose catabolic process"/>
    <property type="evidence" value="ECO:0007669"/>
    <property type="project" value="InterPro"/>
</dbReference>
<dbReference type="GO" id="GO:0051069">
    <property type="term" value="P:galactomannan metabolic process"/>
    <property type="evidence" value="ECO:0000250"/>
    <property type="project" value="UniProtKB"/>
</dbReference>
<dbReference type="GO" id="GO:0010391">
    <property type="term" value="P:glucomannan metabolic process"/>
    <property type="evidence" value="ECO:0000250"/>
    <property type="project" value="UniProtKB"/>
</dbReference>
<dbReference type="GO" id="GO:0046355">
    <property type="term" value="P:mannan catabolic process"/>
    <property type="evidence" value="ECO:0000314"/>
    <property type="project" value="UniProtKB"/>
</dbReference>
<dbReference type="FunFam" id="2.60.120.430:FF:000033">
    <property type="entry name" value="Mannan endo-1,4-beta-mannosidase"/>
    <property type="match status" value="1"/>
</dbReference>
<dbReference type="Gene3D" id="2.60.120.430">
    <property type="entry name" value="Galactose-binding lectin"/>
    <property type="match status" value="1"/>
</dbReference>
<dbReference type="Gene3D" id="3.20.20.80">
    <property type="entry name" value="Glycosidases"/>
    <property type="match status" value="1"/>
</dbReference>
<dbReference type="Gene3D" id="2.60.40.10">
    <property type="entry name" value="Immunoglobulins"/>
    <property type="match status" value="1"/>
</dbReference>
<dbReference type="InterPro" id="IPR005087">
    <property type="entry name" value="CBM11"/>
</dbReference>
<dbReference type="InterPro" id="IPR008979">
    <property type="entry name" value="Galactose-bd-like_sf"/>
</dbReference>
<dbReference type="InterPro" id="IPR022790">
    <property type="entry name" value="GH26_dom"/>
</dbReference>
<dbReference type="InterPro" id="IPR000805">
    <property type="entry name" value="Glyco_hydro_26"/>
</dbReference>
<dbReference type="InterPro" id="IPR017853">
    <property type="entry name" value="Glycoside_hydrolase_SF"/>
</dbReference>
<dbReference type="InterPro" id="IPR013783">
    <property type="entry name" value="Ig-like_fold"/>
</dbReference>
<dbReference type="InterPro" id="IPR019931">
    <property type="entry name" value="LPXTG_anchor"/>
</dbReference>
<dbReference type="PANTHER" id="PTHR40079:SF4">
    <property type="entry name" value="GH26 DOMAIN-CONTAINING PROTEIN-RELATED"/>
    <property type="match status" value="1"/>
</dbReference>
<dbReference type="PANTHER" id="PTHR40079">
    <property type="entry name" value="MANNAN ENDO-1,4-BETA-MANNOSIDASE E-RELATED"/>
    <property type="match status" value="1"/>
</dbReference>
<dbReference type="Pfam" id="PF03425">
    <property type="entry name" value="CBM_11"/>
    <property type="match status" value="1"/>
</dbReference>
<dbReference type="Pfam" id="PF02156">
    <property type="entry name" value="Glyco_hydro_26"/>
    <property type="match status" value="1"/>
</dbReference>
<dbReference type="PRINTS" id="PR00739">
    <property type="entry name" value="GLHYDRLASE26"/>
</dbReference>
<dbReference type="SUPFAM" id="SSF51445">
    <property type="entry name" value="(Trans)glycosidases"/>
    <property type="match status" value="1"/>
</dbReference>
<dbReference type="SUPFAM" id="SSF49785">
    <property type="entry name" value="Galactose-binding domain-like"/>
    <property type="match status" value="2"/>
</dbReference>
<dbReference type="PROSITE" id="PS51764">
    <property type="entry name" value="GH26"/>
    <property type="match status" value="1"/>
</dbReference>
<dbReference type="PROSITE" id="PS50847">
    <property type="entry name" value="GRAM_POS_ANCHORING"/>
    <property type="match status" value="1"/>
</dbReference>
<gene>
    <name type="ordered locus">BAD_1030</name>
</gene>
<proteinExistence type="evidence at protein level"/>
<evidence type="ECO:0000250" key="1">
    <source>
        <dbReference type="UniProtKB" id="P49424"/>
    </source>
</evidence>
<evidence type="ECO:0000255" key="2"/>
<evidence type="ECO:0000255" key="3">
    <source>
        <dbReference type="PROSITE-ProRule" id="PRU00477"/>
    </source>
</evidence>
<evidence type="ECO:0000255" key="4">
    <source>
        <dbReference type="PROSITE-ProRule" id="PRU01100"/>
    </source>
</evidence>
<evidence type="ECO:0000256" key="5">
    <source>
        <dbReference type="SAM" id="MobiDB-lite"/>
    </source>
</evidence>
<evidence type="ECO:0000269" key="6">
    <source>
    </source>
</evidence>
<evidence type="ECO:0000303" key="7">
    <source>
    </source>
</evidence>
<evidence type="ECO:0000305" key="8"/>
<organism>
    <name type="scientific">Bifidobacterium adolescentis (strain ATCC 15703 / DSM 20083 / NCTC 11814 / E194a)</name>
    <dbReference type="NCBI Taxonomy" id="367928"/>
    <lineage>
        <taxon>Bacteria</taxon>
        <taxon>Bacillati</taxon>
        <taxon>Actinomycetota</taxon>
        <taxon>Actinomycetes</taxon>
        <taxon>Bifidobacteriales</taxon>
        <taxon>Bifidobacteriaceae</taxon>
        <taxon>Bifidobacterium</taxon>
    </lineage>
</organism>
<comment type="function">
    <text evidence="6">Beta-mannanase likely involved in the utilization of carbohydrates in the human gut. Catalyzes the hydrolysis of different beta-1,4-linked mannans, such as ivory nut mannan, konjac glucomannan, as well as carob and guar gum galactomannans, to a mixture of oligosaccharides. The dominant product from ivory nut mannan is found to be mannotriose; mannobiose and mannotetraose are produced to a lesser extent. Does not hydrolyze mannobiose, and hydrolyzes mannotriose at a significantly lower rate than the longer oligosaccharides.</text>
</comment>
<comment type="catalytic activity">
    <reaction evidence="6">
        <text>Random hydrolysis of (1-&gt;4)-beta-D-mannosidic linkages in mannans, galactomannans and glucomannans.</text>
        <dbReference type="EC" id="3.2.1.78"/>
    </reaction>
</comment>
<comment type="biophysicochemical properties">
    <phDependence>
        <text evidence="6">Optimum pH is 5.3. Retains over 90% of its activity in the pH range of 5 to 6.</text>
    </phDependence>
</comment>
<comment type="subunit">
    <text evidence="1">Homodimer.</text>
</comment>
<comment type="subcellular location">
    <subcellularLocation>
        <location evidence="8">Secreted</location>
        <location evidence="8">Cell wall</location>
        <topology evidence="8">Peptidoglycan-anchor</topology>
    </subcellularLocation>
    <text evidence="6">Is likely to be cell attached, either by the sortase mechanism (LPXTG motif) or via a C-terminal transmembrane helix.</text>
</comment>
<comment type="domain">
    <text evidence="6">The carbohydrate-binding modules (CBMs) are responsible for the affinity to carob galactomannan.</text>
</comment>
<comment type="similarity">
    <text evidence="4 8">Belongs to the glycosyl hydrolase 26 family.</text>
</comment>
<keyword id="KW-0119">Carbohydrate metabolism</keyword>
<keyword id="KW-0134">Cell wall</keyword>
<keyword id="KW-0326">Glycosidase</keyword>
<keyword id="KW-0378">Hydrolase</keyword>
<keyword id="KW-0572">Peptidoglycan-anchor</keyword>
<keyword id="KW-0624">Polysaccharide degradation</keyword>
<keyword id="KW-1185">Reference proteome</keyword>
<keyword id="KW-0677">Repeat</keyword>
<keyword id="KW-0964">Secreted</keyword>
<keyword id="KW-0732">Signal</keyword>
<protein>
    <recommendedName>
        <fullName evidence="7">Mannan endo-1,4-beta-mannosidase</fullName>
        <ecNumber evidence="6">3.2.1.78</ecNumber>
    </recommendedName>
    <alternativeName>
        <fullName evidence="7">Beta-mannanase</fullName>
    </alternativeName>
    <alternativeName>
        <fullName evidence="7">Mannanase 26A</fullName>
        <shortName evidence="7">Man26A</shortName>
    </alternativeName>
    <alternativeName>
        <fullName evidence="7">Mannanase A</fullName>
        <shortName evidence="7">ManA</shortName>
    </alternativeName>
</protein>
<feature type="signal peptide" evidence="2">
    <location>
        <begin position="1"/>
        <end position="28"/>
    </location>
</feature>
<feature type="chain" id="PRO_0000424380" description="Mannan endo-1,4-beta-mannosidase">
    <location>
        <begin position="29"/>
        <end position="1002"/>
    </location>
</feature>
<feature type="propeptide" id="PRO_0000424381" description="Removed by sortase" evidence="3">
    <location>
        <begin position="970"/>
        <end position="1002"/>
    </location>
</feature>
<feature type="domain" description="GH26" evidence="4">
    <location>
        <begin position="49"/>
        <end position="396"/>
    </location>
</feature>
<feature type="domain" description="CBM11 1" evidence="2">
    <location>
        <begin position="523"/>
        <end position="703"/>
    </location>
</feature>
<feature type="domain" description="CBM11 2" evidence="2">
    <location>
        <begin position="717"/>
        <end position="897"/>
    </location>
</feature>
<feature type="region of interest" description="Disordered" evidence="5">
    <location>
        <begin position="702"/>
        <end position="722"/>
    </location>
</feature>
<feature type="region of interest" description="Disordered" evidence="5">
    <location>
        <begin position="888"/>
        <end position="969"/>
    </location>
</feature>
<feature type="short sequence motif" description="LPXTG sorting signal" evidence="3">
    <location>
        <begin position="966"/>
        <end position="970"/>
    </location>
</feature>
<feature type="compositionally biased region" description="Polar residues" evidence="5">
    <location>
        <begin position="707"/>
        <end position="719"/>
    </location>
</feature>
<feature type="compositionally biased region" description="Basic and acidic residues" evidence="5">
    <location>
        <begin position="897"/>
        <end position="913"/>
    </location>
</feature>
<feature type="compositionally biased region" description="Basic and acidic residues" evidence="5">
    <location>
        <begin position="952"/>
        <end position="966"/>
    </location>
</feature>
<feature type="active site" description="Proton donor" evidence="1">
    <location>
        <position position="205"/>
    </location>
</feature>
<feature type="active site" description="Nucleophile" evidence="1">
    <location>
        <position position="316"/>
    </location>
</feature>
<feature type="binding site" evidence="1">
    <location>
        <position position="144"/>
    </location>
    <ligand>
        <name>substrate</name>
    </ligand>
</feature>
<feature type="binding site" evidence="1">
    <location>
        <position position="210"/>
    </location>
    <ligand>
        <name>substrate</name>
    </ligand>
</feature>
<feature type="binding site" evidence="1">
    <location>
        <position position="278"/>
    </location>
    <ligand>
        <name>substrate</name>
    </ligand>
</feature>
<feature type="binding site" evidence="1">
    <location>
        <position position="384"/>
    </location>
    <ligand>
        <name>substrate</name>
    </ligand>
</feature>
<feature type="site" description="Plays an important role in maintaining the position of the catalytic nucleophile" evidence="1">
    <location>
        <position position="204"/>
    </location>
</feature>
<feature type="modified residue" description="Pentaglycyl murein peptidoglycan amidated threonine" evidence="3">
    <location>
        <position position="969"/>
    </location>
</feature>
<accession>A1A278</accession>